<comment type="similarity">
    <text evidence="1">Belongs to the UPF0473 family.</text>
</comment>
<name>Y1863_STRPD</name>
<sequence length="101" mass="11545">MTHNHENDHQHEVITLVDEQGNETLFEILLTIDGREEFGKNYVLLVPAGSEEDESGEIEIQAYSFTENEDGTEGDLQPIPEDSDAEWDMIEEVFNSFLDEN</sequence>
<evidence type="ECO:0000255" key="1">
    <source>
        <dbReference type="HAMAP-Rule" id="MF_01448"/>
    </source>
</evidence>
<dbReference type="EMBL" id="CP000260">
    <property type="protein sequence ID" value="ABF34928.1"/>
    <property type="molecule type" value="Genomic_DNA"/>
</dbReference>
<dbReference type="RefSeq" id="WP_002982199.1">
    <property type="nucleotide sequence ID" value="NZ_CVUH01000011.1"/>
</dbReference>
<dbReference type="KEGG" id="sph:MGAS10270_Spy1863"/>
<dbReference type="HOGENOM" id="CLU_146610_2_1_9"/>
<dbReference type="Proteomes" id="UP000002436">
    <property type="component" value="Chromosome"/>
</dbReference>
<dbReference type="HAMAP" id="MF_01448">
    <property type="entry name" value="UPF0473"/>
    <property type="match status" value="1"/>
</dbReference>
<dbReference type="InterPro" id="IPR009711">
    <property type="entry name" value="UPF0473"/>
</dbReference>
<dbReference type="NCBIfam" id="NF010215">
    <property type="entry name" value="PRK13678.1-2"/>
    <property type="match status" value="1"/>
</dbReference>
<dbReference type="NCBIfam" id="NF010217">
    <property type="entry name" value="PRK13678.1-4"/>
    <property type="match status" value="1"/>
</dbReference>
<dbReference type="PANTHER" id="PTHR40066">
    <property type="entry name" value="UPF0473 PROTEIN CBO2561/CLC_2432"/>
    <property type="match status" value="1"/>
</dbReference>
<dbReference type="PANTHER" id="PTHR40066:SF1">
    <property type="entry name" value="UPF0473 PROTEIN CBO2561_CLC_2432"/>
    <property type="match status" value="1"/>
</dbReference>
<dbReference type="Pfam" id="PF06949">
    <property type="entry name" value="DUF1292"/>
    <property type="match status" value="1"/>
</dbReference>
<protein>
    <recommendedName>
        <fullName evidence="1">UPF0473 protein MGAS10270_Spy1863</fullName>
    </recommendedName>
</protein>
<accession>Q1JEI1</accession>
<gene>
    <name type="ordered locus">MGAS10270_Spy1863</name>
</gene>
<organism>
    <name type="scientific">Streptococcus pyogenes serotype M2 (strain MGAS10270)</name>
    <dbReference type="NCBI Taxonomy" id="370552"/>
    <lineage>
        <taxon>Bacteria</taxon>
        <taxon>Bacillati</taxon>
        <taxon>Bacillota</taxon>
        <taxon>Bacilli</taxon>
        <taxon>Lactobacillales</taxon>
        <taxon>Streptococcaceae</taxon>
        <taxon>Streptococcus</taxon>
    </lineage>
</organism>
<reference key="1">
    <citation type="journal article" date="2006" name="Proc. Natl. Acad. Sci. U.S.A.">
        <title>Molecular genetic anatomy of inter- and intraserotype variation in the human bacterial pathogen group A Streptococcus.</title>
        <authorList>
            <person name="Beres S.B."/>
            <person name="Richter E.W."/>
            <person name="Nagiec M.J."/>
            <person name="Sumby P."/>
            <person name="Porcella S.F."/>
            <person name="DeLeo F.R."/>
            <person name="Musser J.M."/>
        </authorList>
    </citation>
    <scope>NUCLEOTIDE SEQUENCE [LARGE SCALE GENOMIC DNA]</scope>
    <source>
        <strain>MGAS10270</strain>
    </source>
</reference>
<proteinExistence type="inferred from homology"/>
<feature type="chain" id="PRO_0000304863" description="UPF0473 protein MGAS10270_Spy1863">
    <location>
        <begin position="1"/>
        <end position="101"/>
    </location>
</feature>